<protein>
    <recommendedName>
        <fullName>UPF0488 protein CG14286</fullName>
    </recommendedName>
</protein>
<sequence>MHKRRTAKSINKPPPIQGAIKKPTPVAEPPSIDADLVTQFEVELCWCVQQLQTALDSGKLAQKVAEDTAKNIKVLTSSTAPLIRKRQVMKLALGDYRAKMQQEEQKLLLASRQIKFTPTAESSKKSSFVKKSALLSSGKDFRFNFPSPAEDTSSKEPQPVQDFDPSSLQPAEAGSPFKFNFTIAEDSANDISFSGLNLNK</sequence>
<organism>
    <name type="scientific">Drosophila melanogaster</name>
    <name type="common">Fruit fly</name>
    <dbReference type="NCBI Taxonomy" id="7227"/>
    <lineage>
        <taxon>Eukaryota</taxon>
        <taxon>Metazoa</taxon>
        <taxon>Ecdysozoa</taxon>
        <taxon>Arthropoda</taxon>
        <taxon>Hexapoda</taxon>
        <taxon>Insecta</taxon>
        <taxon>Pterygota</taxon>
        <taxon>Neoptera</taxon>
        <taxon>Endopterygota</taxon>
        <taxon>Diptera</taxon>
        <taxon>Brachycera</taxon>
        <taxon>Muscomorpha</taxon>
        <taxon>Ephydroidea</taxon>
        <taxon>Drosophilidae</taxon>
        <taxon>Drosophila</taxon>
        <taxon>Sophophora</taxon>
    </lineage>
</organism>
<proteinExistence type="evidence at transcript level"/>
<accession>Q9VE11</accession>
<accession>Q4QQ13</accession>
<keyword id="KW-1185">Reference proteome</keyword>
<dbReference type="EMBL" id="AE014297">
    <property type="protein sequence ID" value="AAF55622.1"/>
    <property type="molecule type" value="Genomic_DNA"/>
</dbReference>
<dbReference type="EMBL" id="BT023603">
    <property type="protein sequence ID" value="AAY85003.1"/>
    <property type="status" value="ALT_INIT"/>
    <property type="molecule type" value="mRNA"/>
</dbReference>
<dbReference type="RefSeq" id="NP_650772.1">
    <property type="nucleotide sequence ID" value="NM_142515.3"/>
</dbReference>
<dbReference type="SMR" id="Q9VE11"/>
<dbReference type="FunCoup" id="Q9VE11">
    <property type="interactions" value="357"/>
</dbReference>
<dbReference type="IntAct" id="Q9VE11">
    <property type="interactions" value="3"/>
</dbReference>
<dbReference type="STRING" id="7227.FBpp0083124"/>
<dbReference type="PaxDb" id="7227-FBpp0083124"/>
<dbReference type="DNASU" id="42280"/>
<dbReference type="EnsemblMetazoa" id="FBtr0083710">
    <property type="protein sequence ID" value="FBpp0083124"/>
    <property type="gene ID" value="FBgn0038673"/>
</dbReference>
<dbReference type="GeneID" id="42280"/>
<dbReference type="KEGG" id="dme:Dmel_CG14286"/>
<dbReference type="UCSC" id="CG14286-RA">
    <property type="organism name" value="d. melanogaster"/>
</dbReference>
<dbReference type="AGR" id="FB:FBgn0038673"/>
<dbReference type="FlyBase" id="FBgn0038673">
    <property type="gene designation" value="CG14286"/>
</dbReference>
<dbReference type="VEuPathDB" id="VectorBase:FBgn0038673"/>
<dbReference type="eggNOG" id="ENOG502S7AB">
    <property type="taxonomic scope" value="Eukaryota"/>
</dbReference>
<dbReference type="GeneTree" id="ENSGT00390000000306"/>
<dbReference type="HOGENOM" id="CLU_082144_2_0_1"/>
<dbReference type="InParanoid" id="Q9VE11"/>
<dbReference type="OMA" id="WCVQQLQ"/>
<dbReference type="OrthoDB" id="20277at2759"/>
<dbReference type="PhylomeDB" id="Q9VE11"/>
<dbReference type="BioGRID-ORCS" id="42280">
    <property type="hits" value="0 hits in 1 CRISPR screen"/>
</dbReference>
<dbReference type="GenomeRNAi" id="42280"/>
<dbReference type="PRO" id="PR:Q9VE11"/>
<dbReference type="Proteomes" id="UP000000803">
    <property type="component" value="Chromosome 3R"/>
</dbReference>
<dbReference type="Bgee" id="FBgn0038673">
    <property type="expression patterns" value="Expressed in adult abdomen and 46 other cell types or tissues"/>
</dbReference>
<dbReference type="InterPro" id="IPR029274">
    <property type="entry name" value="DUF4615"/>
</dbReference>
<dbReference type="PANTHER" id="PTHR13602">
    <property type="entry name" value="UPF0488 PROTEIN C8ORF33"/>
    <property type="match status" value="1"/>
</dbReference>
<dbReference type="PANTHER" id="PTHR13602:SF2">
    <property type="entry name" value="UPF0488 PROTEIN C8ORF33"/>
    <property type="match status" value="1"/>
</dbReference>
<dbReference type="Pfam" id="PF15393">
    <property type="entry name" value="DUF4615"/>
    <property type="match status" value="1"/>
</dbReference>
<evidence type="ECO:0000256" key="1">
    <source>
        <dbReference type="SAM" id="MobiDB-lite"/>
    </source>
</evidence>
<evidence type="ECO:0000305" key="2"/>
<comment type="similarity">
    <text evidence="2">Belongs to the UPF0488 family.</text>
</comment>
<comment type="sequence caution" evidence="2">
    <conflict type="erroneous initiation">
        <sequence resource="EMBL-CDS" id="AAY85003"/>
    </conflict>
</comment>
<name>U488_DROME</name>
<reference key="1">
    <citation type="journal article" date="2000" name="Science">
        <title>The genome sequence of Drosophila melanogaster.</title>
        <authorList>
            <person name="Adams M.D."/>
            <person name="Celniker S.E."/>
            <person name="Holt R.A."/>
            <person name="Evans C.A."/>
            <person name="Gocayne J.D."/>
            <person name="Amanatides P.G."/>
            <person name="Scherer S.E."/>
            <person name="Li P.W."/>
            <person name="Hoskins R.A."/>
            <person name="Galle R.F."/>
            <person name="George R.A."/>
            <person name="Lewis S.E."/>
            <person name="Richards S."/>
            <person name="Ashburner M."/>
            <person name="Henderson S.N."/>
            <person name="Sutton G.G."/>
            <person name="Wortman J.R."/>
            <person name="Yandell M.D."/>
            <person name="Zhang Q."/>
            <person name="Chen L.X."/>
            <person name="Brandon R.C."/>
            <person name="Rogers Y.-H.C."/>
            <person name="Blazej R.G."/>
            <person name="Champe M."/>
            <person name="Pfeiffer B.D."/>
            <person name="Wan K.H."/>
            <person name="Doyle C."/>
            <person name="Baxter E.G."/>
            <person name="Helt G."/>
            <person name="Nelson C.R."/>
            <person name="Miklos G.L.G."/>
            <person name="Abril J.F."/>
            <person name="Agbayani A."/>
            <person name="An H.-J."/>
            <person name="Andrews-Pfannkoch C."/>
            <person name="Baldwin D."/>
            <person name="Ballew R.M."/>
            <person name="Basu A."/>
            <person name="Baxendale J."/>
            <person name="Bayraktaroglu L."/>
            <person name="Beasley E.M."/>
            <person name="Beeson K.Y."/>
            <person name="Benos P.V."/>
            <person name="Berman B.P."/>
            <person name="Bhandari D."/>
            <person name="Bolshakov S."/>
            <person name="Borkova D."/>
            <person name="Botchan M.R."/>
            <person name="Bouck J."/>
            <person name="Brokstein P."/>
            <person name="Brottier P."/>
            <person name="Burtis K.C."/>
            <person name="Busam D.A."/>
            <person name="Butler H."/>
            <person name="Cadieu E."/>
            <person name="Center A."/>
            <person name="Chandra I."/>
            <person name="Cherry J.M."/>
            <person name="Cawley S."/>
            <person name="Dahlke C."/>
            <person name="Davenport L.B."/>
            <person name="Davies P."/>
            <person name="de Pablos B."/>
            <person name="Delcher A."/>
            <person name="Deng Z."/>
            <person name="Mays A.D."/>
            <person name="Dew I."/>
            <person name="Dietz S.M."/>
            <person name="Dodson K."/>
            <person name="Doup L.E."/>
            <person name="Downes M."/>
            <person name="Dugan-Rocha S."/>
            <person name="Dunkov B.C."/>
            <person name="Dunn P."/>
            <person name="Durbin K.J."/>
            <person name="Evangelista C.C."/>
            <person name="Ferraz C."/>
            <person name="Ferriera S."/>
            <person name="Fleischmann W."/>
            <person name="Fosler C."/>
            <person name="Gabrielian A.E."/>
            <person name="Garg N.S."/>
            <person name="Gelbart W.M."/>
            <person name="Glasser K."/>
            <person name="Glodek A."/>
            <person name="Gong F."/>
            <person name="Gorrell J.H."/>
            <person name="Gu Z."/>
            <person name="Guan P."/>
            <person name="Harris M."/>
            <person name="Harris N.L."/>
            <person name="Harvey D.A."/>
            <person name="Heiman T.J."/>
            <person name="Hernandez J.R."/>
            <person name="Houck J."/>
            <person name="Hostin D."/>
            <person name="Houston K.A."/>
            <person name="Howland T.J."/>
            <person name="Wei M.-H."/>
            <person name="Ibegwam C."/>
            <person name="Jalali M."/>
            <person name="Kalush F."/>
            <person name="Karpen G.H."/>
            <person name="Ke Z."/>
            <person name="Kennison J.A."/>
            <person name="Ketchum K.A."/>
            <person name="Kimmel B.E."/>
            <person name="Kodira C.D."/>
            <person name="Kraft C.L."/>
            <person name="Kravitz S."/>
            <person name="Kulp D."/>
            <person name="Lai Z."/>
            <person name="Lasko P."/>
            <person name="Lei Y."/>
            <person name="Levitsky A.A."/>
            <person name="Li J.H."/>
            <person name="Li Z."/>
            <person name="Liang Y."/>
            <person name="Lin X."/>
            <person name="Liu X."/>
            <person name="Mattei B."/>
            <person name="McIntosh T.C."/>
            <person name="McLeod M.P."/>
            <person name="McPherson D."/>
            <person name="Merkulov G."/>
            <person name="Milshina N.V."/>
            <person name="Mobarry C."/>
            <person name="Morris J."/>
            <person name="Moshrefi A."/>
            <person name="Mount S.M."/>
            <person name="Moy M."/>
            <person name="Murphy B."/>
            <person name="Murphy L."/>
            <person name="Muzny D.M."/>
            <person name="Nelson D.L."/>
            <person name="Nelson D.R."/>
            <person name="Nelson K.A."/>
            <person name="Nixon K."/>
            <person name="Nusskern D.R."/>
            <person name="Pacleb J.M."/>
            <person name="Palazzolo M."/>
            <person name="Pittman G.S."/>
            <person name="Pan S."/>
            <person name="Pollard J."/>
            <person name="Puri V."/>
            <person name="Reese M.G."/>
            <person name="Reinert K."/>
            <person name="Remington K."/>
            <person name="Saunders R.D.C."/>
            <person name="Scheeler F."/>
            <person name="Shen H."/>
            <person name="Shue B.C."/>
            <person name="Siden-Kiamos I."/>
            <person name="Simpson M."/>
            <person name="Skupski M.P."/>
            <person name="Smith T.J."/>
            <person name="Spier E."/>
            <person name="Spradling A.C."/>
            <person name="Stapleton M."/>
            <person name="Strong R."/>
            <person name="Sun E."/>
            <person name="Svirskas R."/>
            <person name="Tector C."/>
            <person name="Turner R."/>
            <person name="Venter E."/>
            <person name="Wang A.H."/>
            <person name="Wang X."/>
            <person name="Wang Z.-Y."/>
            <person name="Wassarman D.A."/>
            <person name="Weinstock G.M."/>
            <person name="Weissenbach J."/>
            <person name="Williams S.M."/>
            <person name="Woodage T."/>
            <person name="Worley K.C."/>
            <person name="Wu D."/>
            <person name="Yang S."/>
            <person name="Yao Q.A."/>
            <person name="Ye J."/>
            <person name="Yeh R.-F."/>
            <person name="Zaveri J.S."/>
            <person name="Zhan M."/>
            <person name="Zhang G."/>
            <person name="Zhao Q."/>
            <person name="Zheng L."/>
            <person name="Zheng X.H."/>
            <person name="Zhong F.N."/>
            <person name="Zhong W."/>
            <person name="Zhou X."/>
            <person name="Zhu S.C."/>
            <person name="Zhu X."/>
            <person name="Smith H.O."/>
            <person name="Gibbs R.A."/>
            <person name="Myers E.W."/>
            <person name="Rubin G.M."/>
            <person name="Venter J.C."/>
        </authorList>
    </citation>
    <scope>NUCLEOTIDE SEQUENCE [LARGE SCALE GENOMIC DNA]</scope>
    <source>
        <strain>Berkeley</strain>
    </source>
</reference>
<reference key="2">
    <citation type="journal article" date="2002" name="Genome Biol.">
        <title>Annotation of the Drosophila melanogaster euchromatic genome: a systematic review.</title>
        <authorList>
            <person name="Misra S."/>
            <person name="Crosby M.A."/>
            <person name="Mungall C.J."/>
            <person name="Matthews B.B."/>
            <person name="Campbell K.S."/>
            <person name="Hradecky P."/>
            <person name="Huang Y."/>
            <person name="Kaminker J.S."/>
            <person name="Millburn G.H."/>
            <person name="Prochnik S.E."/>
            <person name="Smith C.D."/>
            <person name="Tupy J.L."/>
            <person name="Whitfield E.J."/>
            <person name="Bayraktaroglu L."/>
            <person name="Berman B.P."/>
            <person name="Bettencourt B.R."/>
            <person name="Celniker S.E."/>
            <person name="de Grey A.D.N.J."/>
            <person name="Drysdale R.A."/>
            <person name="Harris N.L."/>
            <person name="Richter J."/>
            <person name="Russo S."/>
            <person name="Schroeder A.J."/>
            <person name="Shu S.Q."/>
            <person name="Stapleton M."/>
            <person name="Yamada C."/>
            <person name="Ashburner M."/>
            <person name="Gelbart W.M."/>
            <person name="Rubin G.M."/>
            <person name="Lewis S.E."/>
        </authorList>
    </citation>
    <scope>GENOME REANNOTATION</scope>
    <source>
        <strain>Berkeley</strain>
    </source>
</reference>
<reference key="3">
    <citation type="submission" date="2005-06" db="EMBL/GenBank/DDBJ databases">
        <authorList>
            <person name="Stapleton M."/>
            <person name="Carlson J.W."/>
            <person name="Chavez C."/>
            <person name="Frise E."/>
            <person name="George R.A."/>
            <person name="Pacleb J.M."/>
            <person name="Park S."/>
            <person name="Wan K.H."/>
            <person name="Yu C."/>
            <person name="Celniker S.E."/>
        </authorList>
    </citation>
    <scope>NUCLEOTIDE SEQUENCE [LARGE SCALE MRNA]</scope>
    <source>
        <strain>Berkeley</strain>
    </source>
</reference>
<gene>
    <name type="ORF">CG14286</name>
</gene>
<feature type="chain" id="PRO_0000304986" description="UPF0488 protein CG14286">
    <location>
        <begin position="1"/>
        <end position="200"/>
    </location>
</feature>
<feature type="region of interest" description="Disordered" evidence="1">
    <location>
        <begin position="1"/>
        <end position="28"/>
    </location>
</feature>
<feature type="region of interest" description="Disordered" evidence="1">
    <location>
        <begin position="139"/>
        <end position="174"/>
    </location>
</feature>